<proteinExistence type="evidence at protein level"/>
<reference key="1">
    <citation type="journal article" date="1986" name="J. Biol. Chem.">
        <title>Construction and sequence of cDNA for rat liver stearyl coenzyme A desaturase.</title>
        <authorList>
            <person name="Thiede M.A."/>
            <person name="Ozols J."/>
            <person name="Strittmatter P."/>
        </authorList>
    </citation>
    <scope>NUCLEOTIDE SEQUENCE [MRNA]</scope>
    <scope>PARTIAL PROTEIN SEQUENCE</scope>
</reference>
<reference key="2">
    <citation type="journal article" date="1990" name="J. Biochem.">
        <title>Structure and regulation of rat liver microsomal stearoyl-CoA desaturase gene.</title>
        <authorList>
            <person name="Mihara K."/>
        </authorList>
    </citation>
    <scope>NUCLEOTIDE SEQUENCE [MRNA]</scope>
    <scope>TISSUE SPECIFICITY</scope>
    <scope>INDUCTION BY FAT-FREE DIET</scope>
</reference>
<reference key="3">
    <citation type="journal article" date="2002" name="Carcinogenesis">
        <title>Stearoyl-CoA desaturase 1 (Scd1) gene overexpression is associated with genetic predisposition to hepatocarcinogenesis in mice and rats.</title>
        <authorList>
            <person name="Falvella F.S."/>
            <person name="Pascale R.M."/>
            <person name="Gariboldi M."/>
            <person name="Manenti G."/>
            <person name="De Miglio M.R."/>
            <person name="Simile M.M."/>
            <person name="Dragani T.A."/>
            <person name="Feo F."/>
        </authorList>
    </citation>
    <scope>NUCLEOTIDE SEQUENCE [MRNA]</scope>
    <source>
        <strain>Brown Norway</strain>
        <strain>Fischer 344</strain>
    </source>
</reference>
<reference key="4">
    <citation type="journal article" date="1988" name="J. Biol. Chem.">
        <title>Bacterial synthesis of active rat Stearoyl-CoA desaturase lacking the 26-residue amino-terminal amino acid sequence.</title>
        <authorList>
            <person name="Strittmatter P."/>
            <person name="Thiede M.A."/>
            <person name="Hackett C.S."/>
            <person name="Ozols J."/>
        </authorList>
    </citation>
    <scope>FUNCTION</scope>
    <scope>CATALYTIC ACTIVITY</scope>
    <scope>COFACTOR</scope>
    <scope>SUBCELLULAR LOCATION</scope>
    <scope>TISSUE SPECIFICITY</scope>
</reference>
<reference key="5">
    <citation type="journal article" date="1994" name="Biochemistry">
        <title>Eight histidine residues are catalytically essential in a membrane-associated iron enzyme, stearoyl-CoA desaturase, and are conserved in alkane hydroxylase and xylene monooxygenase.</title>
        <authorList>
            <person name="Shanklin J."/>
            <person name="Whittle E."/>
            <person name="Fox B.G."/>
        </authorList>
    </citation>
    <scope>CATALYTIC ACTIVITY</scope>
    <scope>COFACTOR</scope>
    <scope>MUTAGENESIS OF HIS-119; HIS-124; HIS-156; ARG-157; HIS-159; HIS-160; HIS-166; HIS-170; ARG-173; HIS-297; HIS-300 AND HIS-301</scope>
</reference>
<feature type="chain" id="PRO_0000185400" description="Acyl-CoA desaturase 1">
    <location>
        <begin position="1"/>
        <end position="358"/>
    </location>
</feature>
<feature type="topological domain" description="Cytoplasmic" evidence="2">
    <location>
        <begin position="1"/>
        <end position="71"/>
    </location>
</feature>
<feature type="transmembrane region" description="Helical" evidence="2">
    <location>
        <begin position="72"/>
        <end position="92"/>
    </location>
</feature>
<feature type="topological domain" description="Lumenal" evidence="2">
    <location>
        <begin position="93"/>
        <end position="96"/>
    </location>
</feature>
<feature type="transmembrane region" description="Helical" evidence="2">
    <location>
        <begin position="97"/>
        <end position="117"/>
    </location>
</feature>
<feature type="topological domain" description="Cytoplasmic" evidence="2">
    <location>
        <begin position="118"/>
        <end position="216"/>
    </location>
</feature>
<feature type="transmembrane region" description="Helical" evidence="2">
    <location>
        <begin position="217"/>
        <end position="236"/>
    </location>
</feature>
<feature type="topological domain" description="Lumenal" evidence="2">
    <location>
        <begin position="237"/>
        <end position="240"/>
    </location>
</feature>
<feature type="transmembrane region" description="Helical" evidence="2">
    <location>
        <begin position="241"/>
        <end position="262"/>
    </location>
</feature>
<feature type="topological domain" description="Cytoplasmic" evidence="2">
    <location>
        <begin position="263"/>
        <end position="358"/>
    </location>
</feature>
<feature type="region of interest" description="Disordered" evidence="3">
    <location>
        <begin position="8"/>
        <end position="33"/>
    </location>
</feature>
<feature type="short sequence motif" description="Histidine box-1" evidence="8">
    <location>
        <begin position="119"/>
        <end position="124"/>
    </location>
</feature>
<feature type="short sequence motif" description="Histidine box-2" evidence="8">
    <location>
        <begin position="156"/>
        <end position="160"/>
    </location>
</feature>
<feature type="short sequence motif" description="Histidine box-3" evidence="8">
    <location>
        <begin position="297"/>
        <end position="301"/>
    </location>
</feature>
<feature type="compositionally biased region" description="Low complexity" evidence="3">
    <location>
        <begin position="8"/>
        <end position="24"/>
    </location>
</feature>
<feature type="binding site" evidence="1">
    <location>
        <position position="74"/>
    </location>
    <ligand>
        <name>substrate</name>
    </ligand>
</feature>
<feature type="binding site" evidence="2">
    <location>
        <position position="119"/>
    </location>
    <ligand>
        <name>Fe cation</name>
        <dbReference type="ChEBI" id="CHEBI:24875"/>
        <label>1</label>
    </ligand>
</feature>
<feature type="binding site" evidence="2">
    <location>
        <position position="124"/>
    </location>
    <ligand>
        <name>Fe cation</name>
        <dbReference type="ChEBI" id="CHEBI:24875"/>
        <label>1</label>
    </ligand>
</feature>
<feature type="binding site" evidence="1">
    <location>
        <position position="147"/>
    </location>
    <ligand>
        <name>substrate</name>
    </ligand>
</feature>
<feature type="binding site" evidence="1">
    <location>
        <position position="154"/>
    </location>
    <ligand>
        <name>substrate</name>
    </ligand>
</feature>
<feature type="binding site" evidence="1">
    <location>
        <position position="155"/>
    </location>
    <ligand>
        <name>substrate</name>
    </ligand>
</feature>
<feature type="binding site" evidence="2">
    <location>
        <position position="156"/>
    </location>
    <ligand>
        <name>Fe cation</name>
        <dbReference type="ChEBI" id="CHEBI:24875"/>
        <label>1</label>
    </ligand>
</feature>
<feature type="binding site" evidence="2">
    <location>
        <position position="159"/>
    </location>
    <ligand>
        <name>Fe cation</name>
        <dbReference type="ChEBI" id="CHEBI:24875"/>
        <label>2</label>
    </ligand>
</feature>
<feature type="binding site" evidence="2">
    <location>
        <position position="160"/>
    </location>
    <ligand>
        <name>Fe cation</name>
        <dbReference type="ChEBI" id="CHEBI:24875"/>
        <label>1</label>
    </ligand>
</feature>
<feature type="binding site" evidence="1">
    <location>
        <position position="187"/>
    </location>
    <ligand>
        <name>substrate</name>
    </ligand>
</feature>
<feature type="binding site" evidence="1">
    <location>
        <position position="188"/>
    </location>
    <ligand>
        <name>substrate</name>
    </ligand>
</feature>
<feature type="binding site" evidence="1">
    <location>
        <position position="261"/>
    </location>
    <ligand>
        <name>substrate</name>
    </ligand>
</feature>
<feature type="binding site" evidence="2">
    <location>
        <position position="268"/>
    </location>
    <ligand>
        <name>Fe cation</name>
        <dbReference type="ChEBI" id="CHEBI:24875"/>
        <label>2</label>
    </ligand>
</feature>
<feature type="binding site" evidence="2">
    <location>
        <position position="297"/>
    </location>
    <ligand>
        <name>Fe cation</name>
        <dbReference type="ChEBI" id="CHEBI:24875"/>
        <label>2</label>
    </ligand>
</feature>
<feature type="binding site" evidence="2">
    <location>
        <position position="300"/>
    </location>
    <ligand>
        <name>Fe cation</name>
        <dbReference type="ChEBI" id="CHEBI:24875"/>
        <label>1</label>
    </ligand>
</feature>
<feature type="binding site" evidence="2">
    <location>
        <position position="301"/>
    </location>
    <ligand>
        <name>Fe cation</name>
        <dbReference type="ChEBI" id="CHEBI:24875"/>
        <label>2</label>
    </ligand>
</feature>
<feature type="mutagenesis site" description="Abolishes enzyme activity." evidence="6">
    <original>H</original>
    <variation>A</variation>
    <location>
        <position position="119"/>
    </location>
</feature>
<feature type="mutagenesis site" description="Abolishes enzyme activity." evidence="6">
    <original>H</original>
    <variation>A</variation>
    <location>
        <position position="124"/>
    </location>
</feature>
<feature type="mutagenesis site" description="Abolishes enzyme activity." evidence="6">
    <original>H</original>
    <variation>A</variation>
    <location>
        <position position="156"/>
    </location>
</feature>
<feature type="mutagenesis site" description="No effect on enzyme activity." evidence="6">
    <original>R</original>
    <variation>N</variation>
    <location>
        <position position="157"/>
    </location>
</feature>
<feature type="mutagenesis site" description="Abolishes enzyme activity." evidence="6">
    <original>H</original>
    <variation>A</variation>
    <location>
        <position position="159"/>
    </location>
</feature>
<feature type="mutagenesis site" description="Abolishes enzyme activity." evidence="6">
    <original>H</original>
    <variation>A</variation>
    <location>
        <position position="160"/>
    </location>
</feature>
<feature type="mutagenesis site" description="No effect on enzyme activity." evidence="6">
    <original>H</original>
    <variation>A</variation>
    <location>
        <position position="166"/>
    </location>
</feature>
<feature type="mutagenesis site" description="No effect on enzyme activity; when associated with H-173." evidence="6">
    <original>H</original>
    <variation>A</variation>
    <location>
        <position position="170"/>
    </location>
</feature>
<feature type="mutagenesis site" description="No effect on enzyme activity; when associated with A-170." evidence="6">
    <original>R</original>
    <variation>H</variation>
    <location>
        <position position="173"/>
    </location>
</feature>
<feature type="mutagenesis site" description="Abolishes enzyme activity." evidence="6">
    <original>H</original>
    <variation>A</variation>
    <location>
        <position position="297"/>
    </location>
</feature>
<feature type="mutagenesis site" description="Abolishes enzyme activity." evidence="6">
    <original>H</original>
    <variation>A</variation>
    <location>
        <position position="300"/>
    </location>
</feature>
<feature type="mutagenesis site" description="Abolishes enzyme activity." evidence="6">
    <original>H</original>
    <variation>A</variation>
    <location>
        <position position="301"/>
    </location>
</feature>
<feature type="mutagenesis site" description="No effect on enzyme activity." evidence="6">
    <original>H</original>
    <variation>A</variation>
    <location>
        <position position="315"/>
    </location>
</feature>
<feature type="sequence conflict" description="In Ref. 1; AAA42116." evidence="8" ref="1">
    <original>A</original>
    <variation>S</variation>
    <location>
        <position position="291"/>
    </location>
</feature>
<gene>
    <name type="primary">Scd1</name>
    <name type="synonym">Scd</name>
</gene>
<comment type="function">
    <text evidence="2 5 6">Stearoyl-CoA desaturase that utilizes O(2) and electrons from reduced cytochrome b5 to introduce the first double bond into saturated fatty acyl-CoA substrates (PubMed:2892838, PubMed:7947684). Catalyzes the insertion of a cis double bond at the Delta-9 position into fatty acyl-CoA substrates including palmitoyl-CoA and stearoyl-CoA (PubMed:2892838, PubMed:7947684). Gives rise to a mixture of 16:1 and 18:1 unsaturated fatty acids. Plays an important role in lipid biosynthesis. Plays an important role in regulating the expression of genes that are involved in lipogenesis and in regulating mitochondrial fatty acid oxidation (By similarity). Plays an important role in body energy homeostasis (By similarity). Contributes to the biosynthesis of membrane phospholipids, cholesterol esters and triglycerides (PubMed:7947684). Required for normal development of sebaceous glands. Required for the biosynthesis of normal levels of Delta-9 unsaturated fatty acids and 1-alkyl-2,3-diacylglycerol in the Harderian gland. Required for normal production of meibum, an oily material that prevents drying of the cornea (By similarity).</text>
</comment>
<comment type="catalytic activity">
    <reaction evidence="5 6">
        <text>octadecanoyl-CoA + 2 Fe(II)-[cytochrome b5] + O2 + 2 H(+) = (9Z)-octadecenoyl-CoA + 2 Fe(III)-[cytochrome b5] + 2 H2O</text>
        <dbReference type="Rhea" id="RHEA:19721"/>
        <dbReference type="Rhea" id="RHEA-COMP:10438"/>
        <dbReference type="Rhea" id="RHEA-COMP:10439"/>
        <dbReference type="ChEBI" id="CHEBI:15377"/>
        <dbReference type="ChEBI" id="CHEBI:15378"/>
        <dbReference type="ChEBI" id="CHEBI:15379"/>
        <dbReference type="ChEBI" id="CHEBI:29033"/>
        <dbReference type="ChEBI" id="CHEBI:29034"/>
        <dbReference type="ChEBI" id="CHEBI:57387"/>
        <dbReference type="ChEBI" id="CHEBI:57394"/>
        <dbReference type="EC" id="1.14.19.1"/>
    </reaction>
</comment>
<comment type="cofactor">
    <cofactor evidence="9 10">
        <name>Fe(2+)</name>
        <dbReference type="ChEBI" id="CHEBI:29033"/>
    </cofactor>
    <text evidence="2">Expected to bind 2 Fe(2+) ions per subunit.</text>
</comment>
<comment type="subcellular location">
    <subcellularLocation>
        <location evidence="1">Endoplasmic reticulum membrane</location>
        <topology evidence="8">Multi-pass membrane protein</topology>
    </subcellularLocation>
    <subcellularLocation>
        <location evidence="5">Membrane</location>
        <topology evidence="5">Multi-pass membrane protein</topology>
    </subcellularLocation>
</comment>
<comment type="tissue specificity">
    <text evidence="4">Detected in liver (at protein level) (PubMed:2892838). Detected in adipose tissue. Detected in liver when rats are kept on a fat-free diet, but not when their food contains unsaturated fatty acids.</text>
</comment>
<comment type="induction">
    <text evidence="4">Up-regulated in liver in the absence of dietary unsaturated fatty acids (PubMed:1982442). Expression in adipose tissue seems to be constitutive (PubMed:1982442).</text>
</comment>
<comment type="domain">
    <text evidence="10">The histidine box domains are involved in binding the catalytic metal ions.</text>
</comment>
<comment type="miscellaneous">
    <text>Desaturase has a half-life of only 4 hours.</text>
</comment>
<comment type="similarity">
    <text evidence="8">Belongs to the fatty acid desaturase type 1 family.</text>
</comment>
<protein>
    <recommendedName>
        <fullName>Acyl-CoA desaturase 1</fullName>
        <ecNumber evidence="5 6">1.14.19.1</ecNumber>
    </recommendedName>
    <alternativeName>
        <fullName evidence="8">Delta(9)-desaturase 1</fullName>
        <shortName evidence="8">Delta-9 desaturase 1</shortName>
    </alternativeName>
    <alternativeName>
        <fullName>Fatty acid desaturase 1</fullName>
    </alternativeName>
    <alternativeName>
        <fullName evidence="7">Stearoyl-CoA desaturase 1</fullName>
    </alternativeName>
</protein>
<name>ACOD1_RAT</name>
<dbReference type="EC" id="1.14.19.1" evidence="5 6"/>
<dbReference type="EMBL" id="J02585">
    <property type="protein sequence ID" value="AAA42116.1"/>
    <property type="molecule type" value="mRNA"/>
</dbReference>
<dbReference type="EMBL" id="AF509568">
    <property type="protein sequence ID" value="AAM34745.1"/>
    <property type="molecule type" value="mRNA"/>
</dbReference>
<dbReference type="EMBL" id="AF509569">
    <property type="protein sequence ID" value="AAM34746.1"/>
    <property type="molecule type" value="mRNA"/>
</dbReference>
<dbReference type="PIR" id="A24699">
    <property type="entry name" value="A24699"/>
</dbReference>
<dbReference type="RefSeq" id="NP_631931.2">
    <property type="nucleotide sequence ID" value="NM_139192.2"/>
</dbReference>
<dbReference type="RefSeq" id="XP_006231495.1">
    <property type="nucleotide sequence ID" value="XM_006231433.2"/>
</dbReference>
<dbReference type="SMR" id="P07308"/>
<dbReference type="BioGRID" id="251497">
    <property type="interactions" value="1"/>
</dbReference>
<dbReference type="FunCoup" id="P07308">
    <property type="interactions" value="350"/>
</dbReference>
<dbReference type="STRING" id="10116.ENSRNOP00000018447"/>
<dbReference type="BindingDB" id="P07308"/>
<dbReference type="ChEMBL" id="CHEMBL5424"/>
<dbReference type="iPTMnet" id="P07308"/>
<dbReference type="PhosphoSitePlus" id="P07308"/>
<dbReference type="PaxDb" id="10116-ENSRNOP00000018447"/>
<dbReference type="PeptideAtlas" id="P07308"/>
<dbReference type="Ensembl" id="ENSRNOT00000018447.6">
    <property type="protein sequence ID" value="ENSRNOP00000018447.3"/>
    <property type="gene ID" value="ENSRNOG00000013552.7"/>
</dbReference>
<dbReference type="GeneID" id="246074"/>
<dbReference type="KEGG" id="rno:246074"/>
<dbReference type="AGR" id="RGD:621176"/>
<dbReference type="CTD" id="6319"/>
<dbReference type="RGD" id="621176">
    <property type="gene designation" value="Scd1"/>
</dbReference>
<dbReference type="eggNOG" id="KOG1600">
    <property type="taxonomic scope" value="Eukaryota"/>
</dbReference>
<dbReference type="GeneTree" id="ENSGT00940000162971"/>
<dbReference type="HOGENOM" id="CLU_027359_0_0_1"/>
<dbReference type="InParanoid" id="P07308"/>
<dbReference type="OMA" id="SCGESWH"/>
<dbReference type="OrthoDB" id="10260134at2759"/>
<dbReference type="BioCyc" id="MetaCyc:MONOMER-14123"/>
<dbReference type="BRENDA" id="1.14.19.1">
    <property type="organism ID" value="5301"/>
</dbReference>
<dbReference type="PRO" id="PR:P07308"/>
<dbReference type="Proteomes" id="UP000002494">
    <property type="component" value="Chromosome 1"/>
</dbReference>
<dbReference type="Bgee" id="ENSRNOG00000013552">
    <property type="expression patterns" value="Expressed in liver and 20 other cell types or tissues"/>
</dbReference>
<dbReference type="GO" id="GO:0005789">
    <property type="term" value="C:endoplasmic reticulum membrane"/>
    <property type="evidence" value="ECO:0000250"/>
    <property type="project" value="UniProtKB"/>
</dbReference>
<dbReference type="GO" id="GO:0016020">
    <property type="term" value="C:membrane"/>
    <property type="evidence" value="ECO:0000314"/>
    <property type="project" value="UniProtKB"/>
</dbReference>
<dbReference type="GO" id="GO:0005506">
    <property type="term" value="F:iron ion binding"/>
    <property type="evidence" value="ECO:0000314"/>
    <property type="project" value="UniProtKB"/>
</dbReference>
<dbReference type="GO" id="GO:0046872">
    <property type="term" value="F:metal ion binding"/>
    <property type="evidence" value="ECO:0000266"/>
    <property type="project" value="RGD"/>
</dbReference>
<dbReference type="GO" id="GO:0016491">
    <property type="term" value="F:oxidoreductase activity"/>
    <property type="evidence" value="ECO:0000315"/>
    <property type="project" value="UniProtKB"/>
</dbReference>
<dbReference type="GO" id="GO:0032896">
    <property type="term" value="F:palmitoyl-CoA 9-desaturase activity"/>
    <property type="evidence" value="ECO:0000266"/>
    <property type="project" value="RGD"/>
</dbReference>
<dbReference type="GO" id="GO:0004768">
    <property type="term" value="F:stearoyl-CoA 9-desaturase activity"/>
    <property type="evidence" value="ECO:0000314"/>
    <property type="project" value="UniProtKB"/>
</dbReference>
<dbReference type="GO" id="GO:0050873">
    <property type="term" value="P:brown fat cell differentiation"/>
    <property type="evidence" value="ECO:0000266"/>
    <property type="project" value="RGD"/>
</dbReference>
<dbReference type="GO" id="GO:0050830">
    <property type="term" value="P:defense response to Gram-positive bacterium"/>
    <property type="evidence" value="ECO:0000266"/>
    <property type="project" value="RGD"/>
</dbReference>
<dbReference type="GO" id="GO:0006633">
    <property type="term" value="P:fatty acid biosynthetic process"/>
    <property type="evidence" value="ECO:0000266"/>
    <property type="project" value="RGD"/>
</dbReference>
<dbReference type="GO" id="GO:0008610">
    <property type="term" value="P:lipid biosynthetic process"/>
    <property type="evidence" value="ECO:0000270"/>
    <property type="project" value="RGD"/>
</dbReference>
<dbReference type="GO" id="GO:0055088">
    <property type="term" value="P:lipid homeostasis"/>
    <property type="evidence" value="ECO:0000266"/>
    <property type="project" value="RGD"/>
</dbReference>
<dbReference type="GO" id="GO:1903966">
    <property type="term" value="P:monounsaturated fatty acid biosynthetic process"/>
    <property type="evidence" value="ECO:0000266"/>
    <property type="project" value="RGD"/>
</dbReference>
<dbReference type="GO" id="GO:0120162">
    <property type="term" value="P:positive regulation of cold-induced thermogenesis"/>
    <property type="evidence" value="ECO:0000250"/>
    <property type="project" value="YuBioLab"/>
</dbReference>
<dbReference type="GO" id="GO:0009617">
    <property type="term" value="P:response to bacterium"/>
    <property type="evidence" value="ECO:0000266"/>
    <property type="project" value="RGD"/>
</dbReference>
<dbReference type="GO" id="GO:0070542">
    <property type="term" value="P:response to fatty acid"/>
    <property type="evidence" value="ECO:0000314"/>
    <property type="project" value="UniProtKB"/>
</dbReference>
<dbReference type="GO" id="GO:0007584">
    <property type="term" value="P:response to nutrient"/>
    <property type="evidence" value="ECO:0000270"/>
    <property type="project" value="RGD"/>
</dbReference>
<dbReference type="GO" id="GO:0048733">
    <property type="term" value="P:sebaceous gland development"/>
    <property type="evidence" value="ECO:0000266"/>
    <property type="project" value="RGD"/>
</dbReference>
<dbReference type="GO" id="GO:0055092">
    <property type="term" value="P:sterol homeostasis"/>
    <property type="evidence" value="ECO:0000266"/>
    <property type="project" value="RGD"/>
</dbReference>
<dbReference type="GO" id="GO:1903699">
    <property type="term" value="P:tarsal gland development"/>
    <property type="evidence" value="ECO:0000266"/>
    <property type="project" value="RGD"/>
</dbReference>
<dbReference type="GO" id="GO:0006641">
    <property type="term" value="P:triglyceride metabolic process"/>
    <property type="evidence" value="ECO:0000266"/>
    <property type="project" value="RGD"/>
</dbReference>
<dbReference type="GO" id="GO:0006636">
    <property type="term" value="P:unsaturated fatty acid biosynthetic process"/>
    <property type="evidence" value="ECO:0000314"/>
    <property type="project" value="UniProtKB"/>
</dbReference>
<dbReference type="GO" id="GO:0050872">
    <property type="term" value="P:white fat cell differentiation"/>
    <property type="evidence" value="ECO:0000266"/>
    <property type="project" value="RGD"/>
</dbReference>
<dbReference type="CDD" id="cd03505">
    <property type="entry name" value="Delta9-FADS-like"/>
    <property type="match status" value="1"/>
</dbReference>
<dbReference type="InterPro" id="IPR015876">
    <property type="entry name" value="Acyl-CoA_DS"/>
</dbReference>
<dbReference type="InterPro" id="IPR001522">
    <property type="entry name" value="FADS-1_CS"/>
</dbReference>
<dbReference type="PANTHER" id="PTHR11351">
    <property type="entry name" value="ACYL-COA DESATURASE"/>
    <property type="match status" value="1"/>
</dbReference>
<dbReference type="PANTHER" id="PTHR11351:SF102">
    <property type="entry name" value="STEAROYL-COA DESATURASE"/>
    <property type="match status" value="1"/>
</dbReference>
<dbReference type="PRINTS" id="PR00075">
    <property type="entry name" value="FACDDSATRASE"/>
</dbReference>
<dbReference type="PROSITE" id="PS00476">
    <property type="entry name" value="FATTY_ACID_DESATUR_1"/>
    <property type="match status" value="1"/>
</dbReference>
<keyword id="KW-0903">Direct protein sequencing</keyword>
<keyword id="KW-0256">Endoplasmic reticulum</keyword>
<keyword id="KW-0275">Fatty acid biosynthesis</keyword>
<keyword id="KW-0276">Fatty acid metabolism</keyword>
<keyword id="KW-0408">Iron</keyword>
<keyword id="KW-0444">Lipid biosynthesis</keyword>
<keyword id="KW-0443">Lipid metabolism</keyword>
<keyword id="KW-0472">Membrane</keyword>
<keyword id="KW-0479">Metal-binding</keyword>
<keyword id="KW-0560">Oxidoreductase</keyword>
<keyword id="KW-1185">Reference proteome</keyword>
<keyword id="KW-0812">Transmembrane</keyword>
<keyword id="KW-1133">Transmembrane helix</keyword>
<sequence length="358" mass="41467">MPAHMLQEISSSYTTTTTITEPPSGNLQNGREKMKKVPLYLEEDIRPEMREDIHDPSYQDEEGPPPKLEYVWRNIILMALLHVGALYGITLIPSSKVYTLLWGIFYYLISALGITAGAHRLWSHRTYKARLPLRIFLIIANTMAFQNDVYEWARDHRAHHKFSETHADPHNSRRGFFFSHVGWLLVRKHPAVKEKGGKLDMSDLKAEKLVMFQRRYYKPGLLLMCFILPTLVPWYCWGETFLHSLFVSTFLRYTLVLNATWLVNSAAHLYGYRPYDKNIQSRENILVSLGAVGEGFHNYHHAFPYDYSASEYRWHINFTTFFIDCMAALGLAYDRKKVSKAAVLARIKRTGDGSHKSS</sequence>
<organism>
    <name type="scientific">Rattus norvegicus</name>
    <name type="common">Rat</name>
    <dbReference type="NCBI Taxonomy" id="10116"/>
    <lineage>
        <taxon>Eukaryota</taxon>
        <taxon>Metazoa</taxon>
        <taxon>Chordata</taxon>
        <taxon>Craniata</taxon>
        <taxon>Vertebrata</taxon>
        <taxon>Euteleostomi</taxon>
        <taxon>Mammalia</taxon>
        <taxon>Eutheria</taxon>
        <taxon>Euarchontoglires</taxon>
        <taxon>Glires</taxon>
        <taxon>Rodentia</taxon>
        <taxon>Myomorpha</taxon>
        <taxon>Muroidea</taxon>
        <taxon>Muridae</taxon>
        <taxon>Murinae</taxon>
        <taxon>Rattus</taxon>
    </lineage>
</organism>
<accession>P07308</accession>
<accession>Q8JZL5</accession>
<evidence type="ECO:0000250" key="1">
    <source>
        <dbReference type="UniProtKB" id="O00767"/>
    </source>
</evidence>
<evidence type="ECO:0000250" key="2">
    <source>
        <dbReference type="UniProtKB" id="P13516"/>
    </source>
</evidence>
<evidence type="ECO:0000256" key="3">
    <source>
        <dbReference type="SAM" id="MobiDB-lite"/>
    </source>
</evidence>
<evidence type="ECO:0000269" key="4">
    <source>
    </source>
</evidence>
<evidence type="ECO:0000269" key="5">
    <source>
    </source>
</evidence>
<evidence type="ECO:0000269" key="6">
    <source>
    </source>
</evidence>
<evidence type="ECO:0000303" key="7">
    <source>
    </source>
</evidence>
<evidence type="ECO:0000305" key="8"/>
<evidence type="ECO:0000305" key="9">
    <source>
    </source>
</evidence>
<evidence type="ECO:0000305" key="10">
    <source>
    </source>
</evidence>